<protein>
    <recommendedName>
        <fullName evidence="1">Transcriptional regulator GfcR</fullName>
    </recommendedName>
</protein>
<evidence type="ECO:0000255" key="1">
    <source>
        <dbReference type="HAMAP-Rule" id="MF_01214"/>
    </source>
</evidence>
<name>GFCR_METBU</name>
<dbReference type="EMBL" id="CP000300">
    <property type="protein sequence ID" value="ABE52692.1"/>
    <property type="molecule type" value="Genomic_DNA"/>
</dbReference>
<dbReference type="RefSeq" id="WP_011499835.1">
    <property type="nucleotide sequence ID" value="NC_007955.1"/>
</dbReference>
<dbReference type="SMR" id="Q12V34"/>
<dbReference type="STRING" id="259564.Mbur_1806"/>
<dbReference type="GeneID" id="3997933"/>
<dbReference type="KEGG" id="mbu:Mbur_1806"/>
<dbReference type="HOGENOM" id="CLU_111001_0_0_2"/>
<dbReference type="OrthoDB" id="68893at2157"/>
<dbReference type="Proteomes" id="UP000001979">
    <property type="component" value="Chromosome"/>
</dbReference>
<dbReference type="GO" id="GO:0003677">
    <property type="term" value="F:DNA binding"/>
    <property type="evidence" value="ECO:0007669"/>
    <property type="project" value="UniProtKB-UniRule"/>
</dbReference>
<dbReference type="GO" id="GO:0004588">
    <property type="term" value="F:orotate phosphoribosyltransferase activity"/>
    <property type="evidence" value="ECO:0007669"/>
    <property type="project" value="TreeGrafter"/>
</dbReference>
<dbReference type="GO" id="GO:0019856">
    <property type="term" value="P:pyrimidine nucleobase biosynthetic process"/>
    <property type="evidence" value="ECO:0007669"/>
    <property type="project" value="TreeGrafter"/>
</dbReference>
<dbReference type="GO" id="GO:0010468">
    <property type="term" value="P:regulation of gene expression"/>
    <property type="evidence" value="ECO:0007669"/>
    <property type="project" value="UniProtKB-UniRule"/>
</dbReference>
<dbReference type="GO" id="GO:0006222">
    <property type="term" value="P:UMP biosynthetic process"/>
    <property type="evidence" value="ECO:0007669"/>
    <property type="project" value="TreeGrafter"/>
</dbReference>
<dbReference type="CDD" id="cd06223">
    <property type="entry name" value="PRTases_typeI"/>
    <property type="match status" value="1"/>
</dbReference>
<dbReference type="Gene3D" id="3.40.50.2020">
    <property type="match status" value="1"/>
</dbReference>
<dbReference type="HAMAP" id="MF_01214">
    <property type="entry name" value="GfcR"/>
    <property type="match status" value="1"/>
</dbReference>
<dbReference type="InterPro" id="IPR022854">
    <property type="entry name" value="GfcR-like"/>
</dbReference>
<dbReference type="InterPro" id="IPR000836">
    <property type="entry name" value="PRibTrfase_dom"/>
</dbReference>
<dbReference type="InterPro" id="IPR029057">
    <property type="entry name" value="PRTase-like"/>
</dbReference>
<dbReference type="NCBIfam" id="NF002620">
    <property type="entry name" value="PRK02277.1"/>
    <property type="match status" value="1"/>
</dbReference>
<dbReference type="PANTHER" id="PTHR19278">
    <property type="entry name" value="OROTATE PHOSPHORIBOSYLTRANSFERASE"/>
    <property type="match status" value="1"/>
</dbReference>
<dbReference type="PANTHER" id="PTHR19278:SF41">
    <property type="entry name" value="PYRE-LIKE PROTEIN"/>
    <property type="match status" value="1"/>
</dbReference>
<dbReference type="Pfam" id="PF00156">
    <property type="entry name" value="Pribosyltran"/>
    <property type="match status" value="1"/>
</dbReference>
<dbReference type="SUPFAM" id="SSF53271">
    <property type="entry name" value="PRTase-like"/>
    <property type="match status" value="1"/>
</dbReference>
<dbReference type="PROSITE" id="PS00103">
    <property type="entry name" value="PUR_PYR_PR_TRANSFER"/>
    <property type="match status" value="1"/>
</dbReference>
<feature type="chain" id="PRO_0000298896" description="Transcriptional regulator GfcR">
    <location>
        <begin position="1"/>
        <end position="203"/>
    </location>
</feature>
<organism>
    <name type="scientific">Methanococcoides burtonii (strain DSM 6242 / NBRC 107633 / OCM 468 / ACE-M)</name>
    <dbReference type="NCBI Taxonomy" id="259564"/>
    <lineage>
        <taxon>Archaea</taxon>
        <taxon>Methanobacteriati</taxon>
        <taxon>Methanobacteriota</taxon>
        <taxon>Stenosarchaea group</taxon>
        <taxon>Methanomicrobia</taxon>
        <taxon>Methanosarcinales</taxon>
        <taxon>Methanosarcinaceae</taxon>
        <taxon>Methanococcoides</taxon>
    </lineage>
</organism>
<gene>
    <name evidence="1" type="primary">gfcR</name>
    <name type="ordered locus">Mbur_1806</name>
</gene>
<comment type="domain">
    <text evidence="1">Contains an N-terminal DNA-binding winged helix-turn-helix domain and a C-terminal regulatory domain (or effector binding domain) resembling phosphoribosyltransferase (PRT) domain.</text>
</comment>
<comment type="similarity">
    <text evidence="1">Belongs to the purine/pyrimidine phosphoribosyltransferase family. GfcR subfamily.</text>
</comment>
<sequence length="203" mass="22224">MKNIEELILKAVELQSNGLVTGQIANELNVSRETVTWLLTRSKKDVVAPAPKDISVTWNSVGQSSYRLRCISQALCDMVIEKLERTQQDADLVIGIGLSGIPIATMMAEELEIDFAIFHDYDDQKGKTNQRGIFSRNFADVEGKKCIIVDDVVSSGATVTDVAEQLREVGATPIAVAVIVDKMNADMIANVPMSSLVRITRVD</sequence>
<proteinExistence type="inferred from homology"/>
<keyword id="KW-0238">DNA-binding</keyword>
<keyword id="KW-0804">Transcription</keyword>
<keyword id="KW-0805">Transcription regulation</keyword>
<accession>Q12V34</accession>
<reference key="1">
    <citation type="journal article" date="2009" name="ISME J.">
        <title>The genome sequence of the psychrophilic archaeon, Methanococcoides burtonii: the role of genome evolution in cold adaptation.</title>
        <authorList>
            <person name="Allen M.A."/>
            <person name="Lauro F.M."/>
            <person name="Williams T.J."/>
            <person name="Burg D."/>
            <person name="Siddiqui K.S."/>
            <person name="De Francisci D."/>
            <person name="Chong K.W."/>
            <person name="Pilak O."/>
            <person name="Chew H.H."/>
            <person name="De Maere M.Z."/>
            <person name="Ting L."/>
            <person name="Katrib M."/>
            <person name="Ng C."/>
            <person name="Sowers K.R."/>
            <person name="Galperin M.Y."/>
            <person name="Anderson I.J."/>
            <person name="Ivanova N."/>
            <person name="Dalin E."/>
            <person name="Martinez M."/>
            <person name="Lapidus A."/>
            <person name="Hauser L."/>
            <person name="Land M."/>
            <person name="Thomas T."/>
            <person name="Cavicchioli R."/>
        </authorList>
    </citation>
    <scope>NUCLEOTIDE SEQUENCE [LARGE SCALE GENOMIC DNA]</scope>
    <source>
        <strain>DSM 6242 / NBRC 107633 / OCM 468 / ACE-M</strain>
    </source>
</reference>